<gene>
    <name evidence="1" type="primary">ispH</name>
    <name type="ordered locus">CHAB381_0483</name>
</gene>
<name>ISPH_CAMHC</name>
<comment type="function">
    <text evidence="1">Catalyzes the conversion of 1-hydroxy-2-methyl-2-(E)-butenyl 4-diphosphate (HMBPP) into a mixture of isopentenyl diphosphate (IPP) and dimethylallyl diphosphate (DMAPP). Acts in the terminal step of the DOXP/MEP pathway for isoprenoid precursor biosynthesis.</text>
</comment>
<comment type="catalytic activity">
    <reaction evidence="1">
        <text>isopentenyl diphosphate + 2 oxidized [2Fe-2S]-[ferredoxin] + H2O = (2E)-4-hydroxy-3-methylbut-2-enyl diphosphate + 2 reduced [2Fe-2S]-[ferredoxin] + 2 H(+)</text>
        <dbReference type="Rhea" id="RHEA:24488"/>
        <dbReference type="Rhea" id="RHEA-COMP:10000"/>
        <dbReference type="Rhea" id="RHEA-COMP:10001"/>
        <dbReference type="ChEBI" id="CHEBI:15377"/>
        <dbReference type="ChEBI" id="CHEBI:15378"/>
        <dbReference type="ChEBI" id="CHEBI:33737"/>
        <dbReference type="ChEBI" id="CHEBI:33738"/>
        <dbReference type="ChEBI" id="CHEBI:128753"/>
        <dbReference type="ChEBI" id="CHEBI:128769"/>
        <dbReference type="EC" id="1.17.7.4"/>
    </reaction>
</comment>
<comment type="catalytic activity">
    <reaction evidence="1">
        <text>dimethylallyl diphosphate + 2 oxidized [2Fe-2S]-[ferredoxin] + H2O = (2E)-4-hydroxy-3-methylbut-2-enyl diphosphate + 2 reduced [2Fe-2S]-[ferredoxin] + 2 H(+)</text>
        <dbReference type="Rhea" id="RHEA:24825"/>
        <dbReference type="Rhea" id="RHEA-COMP:10000"/>
        <dbReference type="Rhea" id="RHEA-COMP:10001"/>
        <dbReference type="ChEBI" id="CHEBI:15377"/>
        <dbReference type="ChEBI" id="CHEBI:15378"/>
        <dbReference type="ChEBI" id="CHEBI:33737"/>
        <dbReference type="ChEBI" id="CHEBI:33738"/>
        <dbReference type="ChEBI" id="CHEBI:57623"/>
        <dbReference type="ChEBI" id="CHEBI:128753"/>
        <dbReference type="EC" id="1.17.7.4"/>
    </reaction>
</comment>
<comment type="cofactor">
    <cofactor evidence="1">
        <name>[4Fe-4S] cluster</name>
        <dbReference type="ChEBI" id="CHEBI:49883"/>
    </cofactor>
    <text evidence="1">Binds 1 [4Fe-4S] cluster per subunit.</text>
</comment>
<comment type="pathway">
    <text evidence="1">Isoprenoid biosynthesis; dimethylallyl diphosphate biosynthesis; dimethylallyl diphosphate from (2E)-4-hydroxy-3-methylbutenyl diphosphate: step 1/1.</text>
</comment>
<comment type="pathway">
    <text evidence="1">Isoprenoid biosynthesis; isopentenyl diphosphate biosynthesis via DXP pathway; isopentenyl diphosphate from 1-deoxy-D-xylulose 5-phosphate: step 6/6.</text>
</comment>
<comment type="similarity">
    <text evidence="1">Belongs to the IspH family.</text>
</comment>
<sequence>MKIELAKKYGFCFGVKRAIKIAENTENSATIGELIHNNEEIDRLHKKFGVKTLNDISEITDEKRLIIRTHGITKDDLDVLKSKNKELIDATCPFVKKPQQIVEKMSSEGYDIVIFGDKNHPEVKGVKSYAKGKVFVVLDVSELKNLKISNKVALVSQTTKRIENFTKIAEFLMTTTKELRIFNTICNATFQNQEAAAKLAKKADVMIIIGGKNSSNTKQLLLISQNFCKNSYLIENENELKKEWFLNKEICGITAGASTPEWIIKKVVKKINTMC</sequence>
<keyword id="KW-0004">4Fe-4S</keyword>
<keyword id="KW-0408">Iron</keyword>
<keyword id="KW-0411">Iron-sulfur</keyword>
<keyword id="KW-0414">Isoprene biosynthesis</keyword>
<keyword id="KW-0479">Metal-binding</keyword>
<keyword id="KW-0560">Oxidoreductase</keyword>
<keyword id="KW-1185">Reference proteome</keyword>
<feature type="chain" id="PRO_1000021096" description="4-hydroxy-3-methylbut-2-enyl diphosphate reductase">
    <location>
        <begin position="1"/>
        <end position="275"/>
    </location>
</feature>
<feature type="active site" description="Proton donor" evidence="1">
    <location>
        <position position="122"/>
    </location>
</feature>
<feature type="binding site" evidence="1">
    <location>
        <position position="12"/>
    </location>
    <ligand>
        <name>[4Fe-4S] cluster</name>
        <dbReference type="ChEBI" id="CHEBI:49883"/>
    </ligand>
</feature>
<feature type="binding site" evidence="1">
    <location>
        <position position="36"/>
    </location>
    <ligand>
        <name>(2E)-4-hydroxy-3-methylbut-2-enyl diphosphate</name>
        <dbReference type="ChEBI" id="CHEBI:128753"/>
    </ligand>
</feature>
<feature type="binding site" evidence="1">
    <location>
        <position position="36"/>
    </location>
    <ligand>
        <name>dimethylallyl diphosphate</name>
        <dbReference type="ChEBI" id="CHEBI:57623"/>
    </ligand>
</feature>
<feature type="binding site" evidence="1">
    <location>
        <position position="36"/>
    </location>
    <ligand>
        <name>isopentenyl diphosphate</name>
        <dbReference type="ChEBI" id="CHEBI:128769"/>
    </ligand>
</feature>
<feature type="binding site" evidence="1">
    <location>
        <position position="70"/>
    </location>
    <ligand>
        <name>(2E)-4-hydroxy-3-methylbut-2-enyl diphosphate</name>
        <dbReference type="ChEBI" id="CHEBI:128753"/>
    </ligand>
</feature>
<feature type="binding site" evidence="1">
    <location>
        <position position="70"/>
    </location>
    <ligand>
        <name>dimethylallyl diphosphate</name>
        <dbReference type="ChEBI" id="CHEBI:57623"/>
    </ligand>
</feature>
<feature type="binding site" evidence="1">
    <location>
        <position position="70"/>
    </location>
    <ligand>
        <name>isopentenyl diphosphate</name>
        <dbReference type="ChEBI" id="CHEBI:128769"/>
    </ligand>
</feature>
<feature type="binding site" evidence="1">
    <location>
        <position position="92"/>
    </location>
    <ligand>
        <name>[4Fe-4S] cluster</name>
        <dbReference type="ChEBI" id="CHEBI:49883"/>
    </ligand>
</feature>
<feature type="binding site" evidence="1">
    <location>
        <position position="120"/>
    </location>
    <ligand>
        <name>(2E)-4-hydroxy-3-methylbut-2-enyl diphosphate</name>
        <dbReference type="ChEBI" id="CHEBI:128753"/>
    </ligand>
</feature>
<feature type="binding site" evidence="1">
    <location>
        <position position="120"/>
    </location>
    <ligand>
        <name>dimethylallyl diphosphate</name>
        <dbReference type="ChEBI" id="CHEBI:57623"/>
    </ligand>
</feature>
<feature type="binding site" evidence="1">
    <location>
        <position position="120"/>
    </location>
    <ligand>
        <name>isopentenyl diphosphate</name>
        <dbReference type="ChEBI" id="CHEBI:128769"/>
    </ligand>
</feature>
<feature type="binding site" evidence="1">
    <location>
        <position position="158"/>
    </location>
    <ligand>
        <name>(2E)-4-hydroxy-3-methylbut-2-enyl diphosphate</name>
        <dbReference type="ChEBI" id="CHEBI:128753"/>
    </ligand>
</feature>
<feature type="binding site" evidence="1">
    <location>
        <position position="186"/>
    </location>
    <ligand>
        <name>[4Fe-4S] cluster</name>
        <dbReference type="ChEBI" id="CHEBI:49883"/>
    </ligand>
</feature>
<feature type="binding site" evidence="1">
    <location>
        <position position="214"/>
    </location>
    <ligand>
        <name>(2E)-4-hydroxy-3-methylbut-2-enyl diphosphate</name>
        <dbReference type="ChEBI" id="CHEBI:128753"/>
    </ligand>
</feature>
<feature type="binding site" evidence="1">
    <location>
        <position position="214"/>
    </location>
    <ligand>
        <name>dimethylallyl diphosphate</name>
        <dbReference type="ChEBI" id="CHEBI:57623"/>
    </ligand>
</feature>
<feature type="binding site" evidence="1">
    <location>
        <position position="214"/>
    </location>
    <ligand>
        <name>isopentenyl diphosphate</name>
        <dbReference type="ChEBI" id="CHEBI:128769"/>
    </ligand>
</feature>
<feature type="binding site" evidence="1">
    <location>
        <position position="215"/>
    </location>
    <ligand>
        <name>(2E)-4-hydroxy-3-methylbut-2-enyl diphosphate</name>
        <dbReference type="ChEBI" id="CHEBI:128753"/>
    </ligand>
</feature>
<feature type="binding site" evidence="1">
    <location>
        <position position="215"/>
    </location>
    <ligand>
        <name>dimethylallyl diphosphate</name>
        <dbReference type="ChEBI" id="CHEBI:57623"/>
    </ligand>
</feature>
<feature type="binding site" evidence="1">
    <location>
        <position position="215"/>
    </location>
    <ligand>
        <name>isopentenyl diphosphate</name>
        <dbReference type="ChEBI" id="CHEBI:128769"/>
    </ligand>
</feature>
<feature type="binding site" evidence="1">
    <location>
        <position position="216"/>
    </location>
    <ligand>
        <name>(2E)-4-hydroxy-3-methylbut-2-enyl diphosphate</name>
        <dbReference type="ChEBI" id="CHEBI:128753"/>
    </ligand>
</feature>
<feature type="binding site" evidence="1">
    <location>
        <position position="216"/>
    </location>
    <ligand>
        <name>dimethylallyl diphosphate</name>
        <dbReference type="ChEBI" id="CHEBI:57623"/>
    </ligand>
</feature>
<feature type="binding site" evidence="1">
    <location>
        <position position="216"/>
    </location>
    <ligand>
        <name>isopentenyl diphosphate</name>
        <dbReference type="ChEBI" id="CHEBI:128769"/>
    </ligand>
</feature>
<feature type="binding site" evidence="1">
    <location>
        <position position="258"/>
    </location>
    <ligand>
        <name>(2E)-4-hydroxy-3-methylbut-2-enyl diphosphate</name>
        <dbReference type="ChEBI" id="CHEBI:128753"/>
    </ligand>
</feature>
<feature type="binding site" evidence="1">
    <location>
        <position position="258"/>
    </location>
    <ligand>
        <name>dimethylallyl diphosphate</name>
        <dbReference type="ChEBI" id="CHEBI:57623"/>
    </ligand>
</feature>
<feature type="binding site" evidence="1">
    <location>
        <position position="258"/>
    </location>
    <ligand>
        <name>isopentenyl diphosphate</name>
        <dbReference type="ChEBI" id="CHEBI:128769"/>
    </ligand>
</feature>
<dbReference type="EC" id="1.17.7.4" evidence="1"/>
<dbReference type="EMBL" id="CP000776">
    <property type="protein sequence ID" value="ABS52514.1"/>
    <property type="molecule type" value="Genomic_DNA"/>
</dbReference>
<dbReference type="RefSeq" id="WP_012108356.1">
    <property type="nucleotide sequence ID" value="NC_009714.1"/>
</dbReference>
<dbReference type="SMR" id="A7I0N0"/>
<dbReference type="STRING" id="360107.CHAB381_0483"/>
<dbReference type="KEGG" id="cha:CHAB381_0483"/>
<dbReference type="eggNOG" id="COG0761">
    <property type="taxonomic scope" value="Bacteria"/>
</dbReference>
<dbReference type="HOGENOM" id="CLU_027486_0_1_7"/>
<dbReference type="OrthoDB" id="9804068at2"/>
<dbReference type="UniPathway" id="UPA00056">
    <property type="reaction ID" value="UER00097"/>
</dbReference>
<dbReference type="UniPathway" id="UPA00059">
    <property type="reaction ID" value="UER00105"/>
</dbReference>
<dbReference type="Proteomes" id="UP000002407">
    <property type="component" value="Chromosome"/>
</dbReference>
<dbReference type="GO" id="GO:0051539">
    <property type="term" value="F:4 iron, 4 sulfur cluster binding"/>
    <property type="evidence" value="ECO:0007669"/>
    <property type="project" value="UniProtKB-UniRule"/>
</dbReference>
<dbReference type="GO" id="GO:0051745">
    <property type="term" value="F:4-hydroxy-3-methylbut-2-enyl diphosphate reductase activity"/>
    <property type="evidence" value="ECO:0007669"/>
    <property type="project" value="UniProtKB-UniRule"/>
</dbReference>
<dbReference type="GO" id="GO:0046872">
    <property type="term" value="F:metal ion binding"/>
    <property type="evidence" value="ECO:0007669"/>
    <property type="project" value="UniProtKB-KW"/>
</dbReference>
<dbReference type="GO" id="GO:0050992">
    <property type="term" value="P:dimethylallyl diphosphate biosynthetic process"/>
    <property type="evidence" value="ECO:0007669"/>
    <property type="project" value="UniProtKB-UniRule"/>
</dbReference>
<dbReference type="GO" id="GO:0019288">
    <property type="term" value="P:isopentenyl diphosphate biosynthetic process, methylerythritol 4-phosphate pathway"/>
    <property type="evidence" value="ECO:0007669"/>
    <property type="project" value="UniProtKB-UniRule"/>
</dbReference>
<dbReference type="GO" id="GO:0016114">
    <property type="term" value="P:terpenoid biosynthetic process"/>
    <property type="evidence" value="ECO:0007669"/>
    <property type="project" value="UniProtKB-UniRule"/>
</dbReference>
<dbReference type="CDD" id="cd13944">
    <property type="entry name" value="lytB_ispH"/>
    <property type="match status" value="1"/>
</dbReference>
<dbReference type="Gene3D" id="3.40.50.11270">
    <property type="match status" value="1"/>
</dbReference>
<dbReference type="Gene3D" id="3.40.1010.20">
    <property type="entry name" value="4-hydroxy-3-methylbut-2-enyl diphosphate reductase, catalytic domain"/>
    <property type="match status" value="2"/>
</dbReference>
<dbReference type="HAMAP" id="MF_00191">
    <property type="entry name" value="IspH"/>
    <property type="match status" value="1"/>
</dbReference>
<dbReference type="InterPro" id="IPR003451">
    <property type="entry name" value="LytB/IspH"/>
</dbReference>
<dbReference type="NCBIfam" id="TIGR00216">
    <property type="entry name" value="ispH_lytB"/>
    <property type="match status" value="1"/>
</dbReference>
<dbReference type="NCBIfam" id="NF002187">
    <property type="entry name" value="PRK01045.1-1"/>
    <property type="match status" value="1"/>
</dbReference>
<dbReference type="PANTHER" id="PTHR30426">
    <property type="entry name" value="4-HYDROXY-3-METHYLBUT-2-ENYL DIPHOSPHATE REDUCTASE"/>
    <property type="match status" value="1"/>
</dbReference>
<dbReference type="PANTHER" id="PTHR30426:SF0">
    <property type="entry name" value="4-HYDROXY-3-METHYLBUT-2-ENYL DIPHOSPHATE REDUCTASE"/>
    <property type="match status" value="1"/>
</dbReference>
<dbReference type="Pfam" id="PF02401">
    <property type="entry name" value="LYTB"/>
    <property type="match status" value="1"/>
</dbReference>
<reference key="1">
    <citation type="submission" date="2007-07" db="EMBL/GenBank/DDBJ databases">
        <title>Complete genome sequence of Campylobacter hominis ATCC BAA-381, a commensal isolated from the human gastrointestinal tract.</title>
        <authorList>
            <person name="Fouts D.E."/>
            <person name="Mongodin E.F."/>
            <person name="Puiu D."/>
            <person name="Sebastian Y."/>
            <person name="Miller W.G."/>
            <person name="Mandrell R.E."/>
            <person name="Nelson K.E."/>
        </authorList>
    </citation>
    <scope>NUCLEOTIDE SEQUENCE [LARGE SCALE GENOMIC DNA]</scope>
    <source>
        <strain>ATCC BAA-381 / DSM 21671 / CCUG 45161 / LMG 19568 / NCTC 13146 / CH001A</strain>
    </source>
</reference>
<evidence type="ECO:0000255" key="1">
    <source>
        <dbReference type="HAMAP-Rule" id="MF_00191"/>
    </source>
</evidence>
<protein>
    <recommendedName>
        <fullName evidence="1">4-hydroxy-3-methylbut-2-enyl diphosphate reductase</fullName>
        <shortName evidence="1">HMBPP reductase</shortName>
        <ecNumber evidence="1">1.17.7.4</ecNumber>
    </recommendedName>
</protein>
<accession>A7I0N0</accession>
<proteinExistence type="inferred from homology"/>
<organism>
    <name type="scientific">Campylobacter hominis (strain ATCC BAA-381 / DSM 21671 / CCUG 45161 / LMG 19568 / NCTC 13146 / CH001A)</name>
    <dbReference type="NCBI Taxonomy" id="360107"/>
    <lineage>
        <taxon>Bacteria</taxon>
        <taxon>Pseudomonadati</taxon>
        <taxon>Campylobacterota</taxon>
        <taxon>Epsilonproteobacteria</taxon>
        <taxon>Campylobacterales</taxon>
        <taxon>Campylobacteraceae</taxon>
        <taxon>Campylobacter</taxon>
    </lineage>
</organism>